<comment type="function">
    <text>Converts alpha-amino-beta-carboxymuconate-epsilon-semialdehyde (ACMS) to alpha-aminomuconate semialdehyde (AMS). ACMS can be converted non-enzymatically to quinolate (QA), a key precursor of NAD, and a potent endogenous excitotoxin of neuronal cells which is implicated in the pathogenesis of various neurodegenerative disorders. In the presence of ACMSD, ACMS is converted to AMS, a benign catabolite. ACMSD ultimately controls the metabolic fate of tryptophan catabolism along the kynurenine pathway.</text>
</comment>
<comment type="catalytic activity">
    <reaction>
        <text>2-amino-3-carboxymuconate 6-semialdehyde + H(+) = 2-aminomuconate 6-semialdehyde + CO2</text>
        <dbReference type="Rhea" id="RHEA:16557"/>
        <dbReference type="ChEBI" id="CHEBI:15378"/>
        <dbReference type="ChEBI" id="CHEBI:16526"/>
        <dbReference type="ChEBI" id="CHEBI:77634"/>
        <dbReference type="ChEBI" id="CHEBI:77803"/>
        <dbReference type="EC" id="4.1.1.45"/>
    </reaction>
</comment>
<comment type="pathway">
    <text>Secondary metabolite metabolism; quinolate metabolism.</text>
</comment>
<comment type="subunit">
    <text evidence="1">Monomer.</text>
</comment>
<comment type="tissue specificity">
    <text evidence="2">Highest expression in kidney with lower levels in liver and brain.</text>
</comment>
<comment type="induction">
    <text evidence="2">By streptozocin-induced diabetes. Repressed by low protein diet.</text>
</comment>
<comment type="similarity">
    <text evidence="3">Belongs to the metallo-dependent hydrolases superfamily. ACMSD family.</text>
</comment>
<name>ACMSD_MOUSE</name>
<keyword id="KW-0210">Decarboxylase</keyword>
<keyword id="KW-0456">Lyase</keyword>
<keyword id="KW-0479">Metal-binding</keyword>
<keyword id="KW-1185">Reference proteome</keyword>
<keyword id="KW-0862">Zinc</keyword>
<reference key="1">
    <citation type="journal article" date="2005" name="Science">
        <title>The transcriptional landscape of the mammalian genome.</title>
        <authorList>
            <person name="Carninci P."/>
            <person name="Kasukawa T."/>
            <person name="Katayama S."/>
            <person name="Gough J."/>
            <person name="Frith M.C."/>
            <person name="Maeda N."/>
            <person name="Oyama R."/>
            <person name="Ravasi T."/>
            <person name="Lenhard B."/>
            <person name="Wells C."/>
            <person name="Kodzius R."/>
            <person name="Shimokawa K."/>
            <person name="Bajic V.B."/>
            <person name="Brenner S.E."/>
            <person name="Batalov S."/>
            <person name="Forrest A.R."/>
            <person name="Zavolan M."/>
            <person name="Davis M.J."/>
            <person name="Wilming L.G."/>
            <person name="Aidinis V."/>
            <person name="Allen J.E."/>
            <person name="Ambesi-Impiombato A."/>
            <person name="Apweiler R."/>
            <person name="Aturaliya R.N."/>
            <person name="Bailey T.L."/>
            <person name="Bansal M."/>
            <person name="Baxter L."/>
            <person name="Beisel K.W."/>
            <person name="Bersano T."/>
            <person name="Bono H."/>
            <person name="Chalk A.M."/>
            <person name="Chiu K.P."/>
            <person name="Choudhary V."/>
            <person name="Christoffels A."/>
            <person name="Clutterbuck D.R."/>
            <person name="Crowe M.L."/>
            <person name="Dalla E."/>
            <person name="Dalrymple B.P."/>
            <person name="de Bono B."/>
            <person name="Della Gatta G."/>
            <person name="di Bernardo D."/>
            <person name="Down T."/>
            <person name="Engstrom P."/>
            <person name="Fagiolini M."/>
            <person name="Faulkner G."/>
            <person name="Fletcher C.F."/>
            <person name="Fukushima T."/>
            <person name="Furuno M."/>
            <person name="Futaki S."/>
            <person name="Gariboldi M."/>
            <person name="Georgii-Hemming P."/>
            <person name="Gingeras T.R."/>
            <person name="Gojobori T."/>
            <person name="Green R.E."/>
            <person name="Gustincich S."/>
            <person name="Harbers M."/>
            <person name="Hayashi Y."/>
            <person name="Hensch T.K."/>
            <person name="Hirokawa N."/>
            <person name="Hill D."/>
            <person name="Huminiecki L."/>
            <person name="Iacono M."/>
            <person name="Ikeo K."/>
            <person name="Iwama A."/>
            <person name="Ishikawa T."/>
            <person name="Jakt M."/>
            <person name="Kanapin A."/>
            <person name="Katoh M."/>
            <person name="Kawasawa Y."/>
            <person name="Kelso J."/>
            <person name="Kitamura H."/>
            <person name="Kitano H."/>
            <person name="Kollias G."/>
            <person name="Krishnan S.P."/>
            <person name="Kruger A."/>
            <person name="Kummerfeld S.K."/>
            <person name="Kurochkin I.V."/>
            <person name="Lareau L.F."/>
            <person name="Lazarevic D."/>
            <person name="Lipovich L."/>
            <person name="Liu J."/>
            <person name="Liuni S."/>
            <person name="McWilliam S."/>
            <person name="Madan Babu M."/>
            <person name="Madera M."/>
            <person name="Marchionni L."/>
            <person name="Matsuda H."/>
            <person name="Matsuzawa S."/>
            <person name="Miki H."/>
            <person name="Mignone F."/>
            <person name="Miyake S."/>
            <person name="Morris K."/>
            <person name="Mottagui-Tabar S."/>
            <person name="Mulder N."/>
            <person name="Nakano N."/>
            <person name="Nakauchi H."/>
            <person name="Ng P."/>
            <person name="Nilsson R."/>
            <person name="Nishiguchi S."/>
            <person name="Nishikawa S."/>
            <person name="Nori F."/>
            <person name="Ohara O."/>
            <person name="Okazaki Y."/>
            <person name="Orlando V."/>
            <person name="Pang K.C."/>
            <person name="Pavan W.J."/>
            <person name="Pavesi G."/>
            <person name="Pesole G."/>
            <person name="Petrovsky N."/>
            <person name="Piazza S."/>
            <person name="Reed J."/>
            <person name="Reid J.F."/>
            <person name="Ring B.Z."/>
            <person name="Ringwald M."/>
            <person name="Rost B."/>
            <person name="Ruan Y."/>
            <person name="Salzberg S.L."/>
            <person name="Sandelin A."/>
            <person name="Schneider C."/>
            <person name="Schoenbach C."/>
            <person name="Sekiguchi K."/>
            <person name="Semple C.A."/>
            <person name="Seno S."/>
            <person name="Sessa L."/>
            <person name="Sheng Y."/>
            <person name="Shibata Y."/>
            <person name="Shimada H."/>
            <person name="Shimada K."/>
            <person name="Silva D."/>
            <person name="Sinclair B."/>
            <person name="Sperling S."/>
            <person name="Stupka E."/>
            <person name="Sugiura K."/>
            <person name="Sultana R."/>
            <person name="Takenaka Y."/>
            <person name="Taki K."/>
            <person name="Tammoja K."/>
            <person name="Tan S.L."/>
            <person name="Tang S."/>
            <person name="Taylor M.S."/>
            <person name="Tegner J."/>
            <person name="Teichmann S.A."/>
            <person name="Ueda H.R."/>
            <person name="van Nimwegen E."/>
            <person name="Verardo R."/>
            <person name="Wei C.L."/>
            <person name="Yagi K."/>
            <person name="Yamanishi H."/>
            <person name="Zabarovsky E."/>
            <person name="Zhu S."/>
            <person name="Zimmer A."/>
            <person name="Hide W."/>
            <person name="Bult C."/>
            <person name="Grimmond S.M."/>
            <person name="Teasdale R.D."/>
            <person name="Liu E.T."/>
            <person name="Brusic V."/>
            <person name="Quackenbush J."/>
            <person name="Wahlestedt C."/>
            <person name="Mattick J.S."/>
            <person name="Hume D.A."/>
            <person name="Kai C."/>
            <person name="Sasaki D."/>
            <person name="Tomaru Y."/>
            <person name="Fukuda S."/>
            <person name="Kanamori-Katayama M."/>
            <person name="Suzuki M."/>
            <person name="Aoki J."/>
            <person name="Arakawa T."/>
            <person name="Iida J."/>
            <person name="Imamura K."/>
            <person name="Itoh M."/>
            <person name="Kato T."/>
            <person name="Kawaji H."/>
            <person name="Kawagashira N."/>
            <person name="Kawashima T."/>
            <person name="Kojima M."/>
            <person name="Kondo S."/>
            <person name="Konno H."/>
            <person name="Nakano K."/>
            <person name="Ninomiya N."/>
            <person name="Nishio T."/>
            <person name="Okada M."/>
            <person name="Plessy C."/>
            <person name="Shibata K."/>
            <person name="Shiraki T."/>
            <person name="Suzuki S."/>
            <person name="Tagami M."/>
            <person name="Waki K."/>
            <person name="Watahiki A."/>
            <person name="Okamura-Oho Y."/>
            <person name="Suzuki H."/>
            <person name="Kawai J."/>
            <person name="Hayashizaki Y."/>
        </authorList>
    </citation>
    <scope>NUCLEOTIDE SEQUENCE [LARGE SCALE MRNA]</scope>
    <source>
        <strain>C57BL/6J</strain>
        <tissue>Kidney</tissue>
    </source>
</reference>
<reference key="2">
    <citation type="journal article" date="2004" name="Genome Res.">
        <title>The status, quality, and expansion of the NIH full-length cDNA project: the Mammalian Gene Collection (MGC).</title>
        <authorList>
            <consortium name="The MGC Project Team"/>
        </authorList>
    </citation>
    <scope>NUCLEOTIDE SEQUENCE [LARGE SCALE MRNA]</scope>
    <source>
        <tissue>Brain</tissue>
    </source>
</reference>
<reference evidence="3" key="3">
    <citation type="journal article" date="2002" name="J. Biol. Chem.">
        <title>Identification and expression of a cDNA encoding human alpha-amino-beta-carboxymuconate-epsilon-semialdehyde decarboxylase (ACMSD). A key enzyme for the tryptophan-niacine pathway and 'quinolinate hypothesis'.</title>
        <authorList>
            <person name="Fukuoka S."/>
            <person name="Ishiguro K."/>
            <person name="Yanagihara K."/>
            <person name="Tanabe A."/>
            <person name="Egashira Y."/>
            <person name="Sanada H."/>
            <person name="Shibata K."/>
        </authorList>
    </citation>
    <scope>NUCLEOTIDE SEQUENCE [MRNA] OF 1-194</scope>
    <scope>TISSUE SPECIFICITY</scope>
    <scope>INDUCTION</scope>
</reference>
<reference key="4">
    <citation type="journal article" date="2010" name="Cell">
        <title>A tissue-specific atlas of mouse protein phosphorylation and expression.</title>
        <authorList>
            <person name="Huttlin E.L."/>
            <person name="Jedrychowski M.P."/>
            <person name="Elias J.E."/>
            <person name="Goswami T."/>
            <person name="Rad R."/>
            <person name="Beausoleil S.A."/>
            <person name="Villen J."/>
            <person name="Haas W."/>
            <person name="Sowa M.E."/>
            <person name="Gygi S.P."/>
        </authorList>
    </citation>
    <scope>IDENTIFICATION BY MASS SPECTROMETRY [LARGE SCALE ANALYSIS]</scope>
    <source>
        <tissue>Kidney</tissue>
        <tissue>Liver</tissue>
    </source>
</reference>
<organism evidence="4">
    <name type="scientific">Mus musculus</name>
    <name type="common">Mouse</name>
    <dbReference type="NCBI Taxonomy" id="10090"/>
    <lineage>
        <taxon>Eukaryota</taxon>
        <taxon>Metazoa</taxon>
        <taxon>Chordata</taxon>
        <taxon>Craniata</taxon>
        <taxon>Vertebrata</taxon>
        <taxon>Euteleostomi</taxon>
        <taxon>Mammalia</taxon>
        <taxon>Eutheria</taxon>
        <taxon>Euarchontoglires</taxon>
        <taxon>Glires</taxon>
        <taxon>Rodentia</taxon>
        <taxon>Myomorpha</taxon>
        <taxon>Muroidea</taxon>
        <taxon>Muridae</taxon>
        <taxon>Murinae</taxon>
        <taxon>Mus</taxon>
        <taxon>Mus</taxon>
    </lineage>
</organism>
<proteinExistence type="evidence at protein level"/>
<evidence type="ECO:0000250" key="1"/>
<evidence type="ECO:0000269" key="2">
    <source>
    </source>
</evidence>
<evidence type="ECO:0000305" key="3"/>
<evidence type="ECO:0000312" key="4">
    <source>
        <dbReference type="EMBL" id="BAB86939.1"/>
    </source>
</evidence>
<accession>Q8R519</accession>
<accession>B9EI97</accession>
<accession>Q3UNW3</accession>
<sequence>MKIDIHTHILPKEWPDLEKRFGYGGWVQLQQQGKGEAKMIKDGKLFRVIQQNCWDPEVRIREMNQKGVTVQALSTVPVMFSYWAKPKDTLELCQFLNNDLAATVARYPRRFVGLGTLPMQAPELAVEEMERCVKALGFPGIQIGSHINTWDLNDPELFPIYAAAERLNCSLFVHPWDMQMDGRMAKYWLPWLVGMPSETTMAICSMIMGGVFEKFPKLKVCFAHGGGAFPFTIGRIAHGFNMRPDLCAQDNPSDPRKYLGSFYTDSLVHDPLSLKLLTDVIGKDKVMLGTDYPFPLGEQEPGKLIESMAEFDEETKDKLTAGNALAFLGLERKLFE</sequence>
<protein>
    <recommendedName>
        <fullName>2-amino-3-carboxymuconate-6-semialdehyde decarboxylase</fullName>
        <ecNumber>4.1.1.45</ecNumber>
    </recommendedName>
    <alternativeName>
        <fullName>Picolinate carboxylase</fullName>
    </alternativeName>
</protein>
<gene>
    <name type="primary">Acmsd</name>
</gene>
<feature type="chain" id="PRO_0000190980" description="2-amino-3-carboxymuconate-6-semialdehyde decarboxylase">
    <location>
        <begin position="1"/>
        <end position="336"/>
    </location>
</feature>
<feature type="binding site" evidence="1">
    <location>
        <position position="6"/>
    </location>
    <ligand>
        <name>Zn(2+)</name>
        <dbReference type="ChEBI" id="CHEBI:29105"/>
    </ligand>
</feature>
<feature type="binding site" evidence="1">
    <location>
        <position position="8"/>
    </location>
    <ligand>
        <name>Zn(2+)</name>
        <dbReference type="ChEBI" id="CHEBI:29105"/>
    </ligand>
</feature>
<feature type="binding site" evidence="1">
    <location>
        <position position="47"/>
    </location>
    <ligand>
        <name>substrate</name>
    </ligand>
</feature>
<feature type="binding site" evidence="1">
    <location>
        <position position="174"/>
    </location>
    <ligand>
        <name>Zn(2+)</name>
        <dbReference type="ChEBI" id="CHEBI:29105"/>
    </ligand>
</feature>
<feature type="binding site" evidence="1">
    <location>
        <position position="291"/>
    </location>
    <ligand>
        <name>Zn(2+)</name>
        <dbReference type="ChEBI" id="CHEBI:29105"/>
    </ligand>
</feature>
<dbReference type="EC" id="4.1.1.45"/>
<dbReference type="EMBL" id="AK143962">
    <property type="protein sequence ID" value="BAE25634.1"/>
    <property type="molecule type" value="mRNA"/>
</dbReference>
<dbReference type="EMBL" id="BC139281">
    <property type="protein sequence ID" value="AAI39282.1"/>
    <property type="molecule type" value="mRNA"/>
</dbReference>
<dbReference type="EMBL" id="AB071419">
    <property type="protein sequence ID" value="BAB86939.1"/>
    <property type="molecule type" value="mRNA"/>
</dbReference>
<dbReference type="CCDS" id="CCDS15247.1"/>
<dbReference type="RefSeq" id="NP_001028213.1">
    <property type="nucleotide sequence ID" value="NM_001033041.3"/>
</dbReference>
<dbReference type="SMR" id="Q8R519"/>
<dbReference type="BioGRID" id="234466">
    <property type="interactions" value="1"/>
</dbReference>
<dbReference type="FunCoup" id="Q8R519">
    <property type="interactions" value="345"/>
</dbReference>
<dbReference type="STRING" id="10090.ENSMUSP00000048482"/>
<dbReference type="ChEMBL" id="CHEMBL4523405"/>
<dbReference type="iPTMnet" id="Q8R519"/>
<dbReference type="PhosphoSitePlus" id="Q8R519"/>
<dbReference type="jPOST" id="Q8R519"/>
<dbReference type="PaxDb" id="10090-ENSMUSP00000048482"/>
<dbReference type="ProteomicsDB" id="285588"/>
<dbReference type="Antibodypedia" id="2546">
    <property type="antibodies" value="115 antibodies from 21 providers"/>
</dbReference>
<dbReference type="DNASU" id="266645"/>
<dbReference type="Ensembl" id="ENSMUST00000038006.8">
    <property type="protein sequence ID" value="ENSMUSP00000048482.7"/>
    <property type="gene ID" value="ENSMUSG00000026348.8"/>
</dbReference>
<dbReference type="GeneID" id="266645"/>
<dbReference type="KEGG" id="mmu:266645"/>
<dbReference type="UCSC" id="uc007ckv.1">
    <property type="organism name" value="mouse"/>
</dbReference>
<dbReference type="AGR" id="MGI:2386323"/>
<dbReference type="CTD" id="130013"/>
<dbReference type="MGI" id="MGI:2386323">
    <property type="gene designation" value="Acmsd"/>
</dbReference>
<dbReference type="VEuPathDB" id="HostDB:ENSMUSG00000026348"/>
<dbReference type="eggNOG" id="KOG4245">
    <property type="taxonomic scope" value="Eukaryota"/>
</dbReference>
<dbReference type="GeneTree" id="ENSGT00490000043417"/>
<dbReference type="HOGENOM" id="CLU_039329_1_2_1"/>
<dbReference type="InParanoid" id="Q8R519"/>
<dbReference type="OMA" id="RIESCIM"/>
<dbReference type="OrthoDB" id="191270at2759"/>
<dbReference type="PhylomeDB" id="Q8R519"/>
<dbReference type="TreeFam" id="TF313232"/>
<dbReference type="BRENDA" id="4.1.1.45">
    <property type="organism ID" value="3474"/>
</dbReference>
<dbReference type="UniPathway" id="UPA00270"/>
<dbReference type="BioGRID-ORCS" id="266645">
    <property type="hits" value="1 hit in 77 CRISPR screens"/>
</dbReference>
<dbReference type="ChiTaRS" id="Acmsd">
    <property type="organism name" value="mouse"/>
</dbReference>
<dbReference type="PRO" id="PR:Q8R519"/>
<dbReference type="Proteomes" id="UP000000589">
    <property type="component" value="Chromosome 1"/>
</dbReference>
<dbReference type="RNAct" id="Q8R519">
    <property type="molecule type" value="protein"/>
</dbReference>
<dbReference type="Bgee" id="ENSMUSG00000026348">
    <property type="expression patterns" value="Expressed in right kidney and 21 other cell types or tissues"/>
</dbReference>
<dbReference type="GO" id="GO:0005829">
    <property type="term" value="C:cytosol"/>
    <property type="evidence" value="ECO:0000250"/>
    <property type="project" value="UniProtKB"/>
</dbReference>
<dbReference type="GO" id="GO:0001760">
    <property type="term" value="F:aminocarboxymuconate-semialdehyde decarboxylase activity"/>
    <property type="evidence" value="ECO:0000250"/>
    <property type="project" value="UniProtKB"/>
</dbReference>
<dbReference type="GO" id="GO:0016787">
    <property type="term" value="F:hydrolase activity"/>
    <property type="evidence" value="ECO:0007669"/>
    <property type="project" value="InterPro"/>
</dbReference>
<dbReference type="GO" id="GO:0008270">
    <property type="term" value="F:zinc ion binding"/>
    <property type="evidence" value="ECO:0007669"/>
    <property type="project" value="Ensembl"/>
</dbReference>
<dbReference type="GO" id="GO:0006569">
    <property type="term" value="P:L-tryptophan catabolic process"/>
    <property type="evidence" value="ECO:0007669"/>
    <property type="project" value="Ensembl"/>
</dbReference>
<dbReference type="GO" id="GO:1904985">
    <property type="term" value="P:negative regulation of quinolinate biosynthetic process"/>
    <property type="evidence" value="ECO:0000250"/>
    <property type="project" value="UniProtKB"/>
</dbReference>
<dbReference type="GO" id="GO:0046874">
    <property type="term" value="P:quinolinate metabolic process"/>
    <property type="evidence" value="ECO:0000266"/>
    <property type="project" value="MGI"/>
</dbReference>
<dbReference type="CDD" id="cd01292">
    <property type="entry name" value="metallo-dependent_hydrolases"/>
    <property type="match status" value="1"/>
</dbReference>
<dbReference type="FunFam" id="3.20.20.140:FF:000029">
    <property type="entry name" value="2-amino-3-carboxymuconate-6-semialdehyde decarboxylase"/>
    <property type="match status" value="1"/>
</dbReference>
<dbReference type="Gene3D" id="3.20.20.140">
    <property type="entry name" value="Metal-dependent hydrolases"/>
    <property type="match status" value="1"/>
</dbReference>
<dbReference type="InterPro" id="IPR032465">
    <property type="entry name" value="ACMSD"/>
</dbReference>
<dbReference type="InterPro" id="IPR006680">
    <property type="entry name" value="Amidohydro-rel"/>
</dbReference>
<dbReference type="InterPro" id="IPR032466">
    <property type="entry name" value="Metal_Hydrolase"/>
</dbReference>
<dbReference type="PANTHER" id="PTHR21240">
    <property type="entry name" value="2-AMINO-3-CARBOXYLMUCONATE-6-SEMIALDEHYDE DECARBOXYLASE"/>
    <property type="match status" value="1"/>
</dbReference>
<dbReference type="PANTHER" id="PTHR21240:SF27">
    <property type="entry name" value="2-AMINO-3-CARBOXYMUCONATE-6-SEMIALDEHYDE DECARBOXYLASE"/>
    <property type="match status" value="1"/>
</dbReference>
<dbReference type="Pfam" id="PF04909">
    <property type="entry name" value="Amidohydro_2"/>
    <property type="match status" value="1"/>
</dbReference>
<dbReference type="SUPFAM" id="SSF51556">
    <property type="entry name" value="Metallo-dependent hydrolases"/>
    <property type="match status" value="1"/>
</dbReference>